<feature type="initiator methionine" description="Removed" evidence="2">
    <location>
        <position position="1"/>
    </location>
</feature>
<feature type="chain" id="PRO_0000158329" description="Histone H4">
    <location>
        <begin position="2"/>
        <end position="103"/>
    </location>
</feature>
<feature type="DNA-binding region">
    <location>
        <begin position="17"/>
        <end position="21"/>
    </location>
</feature>
<feature type="region of interest" description="Disordered" evidence="4">
    <location>
        <begin position="1"/>
        <end position="20"/>
    </location>
</feature>
<feature type="compositionally biased region" description="Gly residues" evidence="4">
    <location>
        <begin position="1"/>
        <end position="14"/>
    </location>
</feature>
<feature type="modified residue" description="N-acetylserine" evidence="2">
    <location>
        <position position="2"/>
    </location>
</feature>
<feature type="modified residue" description="Phosphoserine" evidence="8">
    <location>
        <position position="2"/>
    </location>
</feature>
<feature type="modified residue" description="Asymmetric dimethylarginine; by PRMT1; alternate" evidence="7">
    <location>
        <position position="4"/>
    </location>
</feature>
<feature type="modified residue" description="Citrulline; alternate" evidence="3">
    <location>
        <position position="4"/>
    </location>
</feature>
<feature type="modified residue" description="Omega-N-methylarginine; by PRMT1; alternate" evidence="3">
    <location>
        <position position="4"/>
    </location>
</feature>
<feature type="modified residue" description="Symmetric dimethylarginine; by PRMT5 and PRMT7; alternate" evidence="7">
    <location>
        <position position="4"/>
    </location>
</feature>
<feature type="modified residue" description="N6-(2-hydroxyisobutyryl)lysine; alternate" evidence="12">
    <location>
        <position position="6"/>
    </location>
</feature>
<feature type="modified residue" description="N6-(beta-hydroxybutyryl)lysine; alternate" evidence="14">
    <location>
        <position position="6"/>
    </location>
</feature>
<feature type="modified residue" description="N6-acetyl-N6-methyllysine; alternate" evidence="18">
    <location>
        <position position="6"/>
    </location>
</feature>
<feature type="modified residue" description="N6-acetyllysine; alternate" evidence="24 25">
    <location>
        <position position="6"/>
    </location>
</feature>
<feature type="modified residue" description="N6-butyryllysine; alternate" evidence="13">
    <location>
        <position position="6"/>
    </location>
</feature>
<feature type="modified residue" description="N6-crotonyllysine; alternate" evidence="9">
    <location>
        <position position="6"/>
    </location>
</feature>
<feature type="modified residue" description="N6-glutaryllysine; alternate" evidence="3">
    <location>
        <position position="6"/>
    </location>
</feature>
<feature type="modified residue" description="N6-lactoyllysine; alternate" evidence="3">
    <location>
        <position position="6"/>
    </location>
</feature>
<feature type="modified residue" description="N6-(2-hydroxyisobutyryl)lysine; alternate" evidence="12">
    <location>
        <position position="9"/>
    </location>
</feature>
<feature type="modified residue" description="N6-(beta-hydroxybutyryl)lysine; alternate" evidence="14">
    <location>
        <position position="9"/>
    </location>
</feature>
<feature type="modified residue" description="N6-acetyllysine; alternate" evidence="24 25">
    <location>
        <position position="9"/>
    </location>
</feature>
<feature type="modified residue" description="N6-butyryllysine; alternate" evidence="13">
    <location>
        <position position="9"/>
    </location>
</feature>
<feature type="modified residue" description="N6-crotonyllysine; alternate" evidence="9">
    <location>
        <position position="9"/>
    </location>
</feature>
<feature type="modified residue" description="N6-lactoyllysine; alternate" evidence="16">
    <location>
        <position position="9"/>
    </location>
</feature>
<feature type="modified residue" description="N6-propionyllysine; alternate" evidence="3">
    <location>
        <position position="9"/>
    </location>
</feature>
<feature type="modified residue" description="N6-(2-hydroxyisobutyryl)lysine; alternate" evidence="12">
    <location>
        <position position="13"/>
    </location>
</feature>
<feature type="modified residue" description="N6-(beta-hydroxybutyryl)lysine; alternate" evidence="14">
    <location>
        <position position="13"/>
    </location>
</feature>
<feature type="modified residue" description="N6-acetyl-N6-methyllysine; alternate" evidence="18">
    <location>
        <position position="13"/>
    </location>
</feature>
<feature type="modified residue" description="N6-acetyllysine; alternate" evidence="24 25">
    <location>
        <position position="13"/>
    </location>
</feature>
<feature type="modified residue" description="N6-butyryllysine; alternate" evidence="13">
    <location>
        <position position="13"/>
    </location>
</feature>
<feature type="modified residue" description="N6-crotonyllysine; alternate" evidence="3">
    <location>
        <position position="13"/>
    </location>
</feature>
<feature type="modified residue" description="N6-glutaryllysine; alternate" evidence="3">
    <location>
        <position position="13"/>
    </location>
</feature>
<feature type="modified residue" description="N6-lactoyllysine; alternate" evidence="16">
    <location>
        <position position="13"/>
    </location>
</feature>
<feature type="modified residue" description="N6-methyllysine; alternate" evidence="3">
    <location>
        <position position="13"/>
    </location>
</feature>
<feature type="modified residue" description="N6-succinyllysine; alternate" evidence="3">
    <location>
        <position position="13"/>
    </location>
</feature>
<feature type="modified residue" description="N6-(2-hydroxyisobutyryl)lysine; alternate" evidence="12">
    <location>
        <position position="17"/>
    </location>
</feature>
<feature type="modified residue" description="N6-acetyllysine; alternate" evidence="15 24 25">
    <location>
        <position position="17"/>
    </location>
</feature>
<feature type="modified residue" description="N6-butyryllysine; alternate" evidence="3">
    <location>
        <position position="17"/>
    </location>
</feature>
<feature type="modified residue" description="N6-crotonyllysine; alternate" evidence="9">
    <location>
        <position position="17"/>
    </location>
</feature>
<feature type="modified residue" description="N6-lactoyllysine; alternate" evidence="3">
    <location>
        <position position="17"/>
    </location>
</feature>
<feature type="modified residue" description="N6-propionyllysine; alternate" evidence="3">
    <location>
        <position position="17"/>
    </location>
</feature>
<feature type="modified residue" description="N6,N6,N6-trimethyllysine; alternate" evidence="6">
    <location>
        <position position="21"/>
    </location>
</feature>
<feature type="modified residue" description="N6,N6-dimethyllysine; alternate" evidence="2">
    <location>
        <position position="21"/>
    </location>
</feature>
<feature type="modified residue" description="N6-methyllysine; alternate" evidence="2">
    <location>
        <position position="21"/>
    </location>
</feature>
<feature type="modified residue" description="N6-(2-hydroxyisobutyryl)lysine; alternate" evidence="12">
    <location>
        <position position="32"/>
    </location>
</feature>
<feature type="modified residue" description="N6-acetyllysine; alternate" evidence="25">
    <location>
        <position position="32"/>
    </location>
</feature>
<feature type="modified residue" description="N6-butyryllysine; alternate" evidence="3">
    <location>
        <position position="32"/>
    </location>
</feature>
<feature type="modified residue" description="N6-glutaryllysine; alternate" evidence="3">
    <location>
        <position position="32"/>
    </location>
</feature>
<feature type="modified residue" description="N6-lactoyllysine; alternate" evidence="16">
    <location>
        <position position="32"/>
    </location>
</feature>
<feature type="modified residue" description="N6-propionyllysine; alternate" evidence="3">
    <location>
        <position position="32"/>
    </location>
</feature>
<feature type="modified residue" description="N6-succinyllysine; alternate" evidence="10">
    <location>
        <position position="32"/>
    </location>
</feature>
<feature type="modified residue" description="N6-(2-hydroxyisobutyryl)lysine; alternate" evidence="12">
    <location>
        <position position="45"/>
    </location>
</feature>
<feature type="modified residue" description="N6-butyryllysine; alternate" evidence="3">
    <location>
        <position position="45"/>
    </location>
</feature>
<feature type="modified residue" description="N6-propionyllysine; alternate" evidence="3">
    <location>
        <position position="45"/>
    </location>
</feature>
<feature type="modified residue" description="Phosphoserine" evidence="23">
    <location>
        <position position="48"/>
    </location>
</feature>
<feature type="modified residue" description="Phosphotyrosine" evidence="21 22 23">
    <location>
        <position position="52"/>
    </location>
</feature>
<feature type="modified residue" description="N6-(2-hydroxyisobutyryl)lysine; alternate" evidence="12">
    <location>
        <position position="60"/>
    </location>
</feature>
<feature type="modified residue" description="N6-glutaryllysine; alternate" evidence="3">
    <location>
        <position position="60"/>
    </location>
</feature>
<feature type="modified residue" description="N6-(2-hydroxyisobutyryl)lysine; alternate" evidence="12">
    <location>
        <position position="78"/>
    </location>
</feature>
<feature type="modified residue" description="N6-butyryllysine; alternate" evidence="3">
    <location>
        <position position="78"/>
    </location>
</feature>
<feature type="modified residue" description="N6-glutaryllysine; alternate" evidence="3">
    <location>
        <position position="78"/>
    </location>
</feature>
<feature type="modified residue" description="N6-lactoyllysine; alternate" evidence="3">
    <location>
        <position position="78"/>
    </location>
</feature>
<feature type="modified residue" description="N6-propionyllysine; alternate" evidence="3">
    <location>
        <position position="78"/>
    </location>
</feature>
<feature type="modified residue" description="N6-succinyllysine; alternate" evidence="10">
    <location>
        <position position="78"/>
    </location>
</feature>
<feature type="modified residue" description="N6-(2-hydroxyisobutyryl)lysine; alternate" evidence="12">
    <location>
        <position position="80"/>
    </location>
</feature>
<feature type="modified residue" description="N6-butyryllysine; alternate" evidence="3">
    <location>
        <position position="80"/>
    </location>
</feature>
<feature type="modified residue" description="N6-glutaryllysine; alternate" evidence="3">
    <location>
        <position position="80"/>
    </location>
</feature>
<feature type="modified residue" description="N6-propionyllysine; alternate" evidence="3">
    <location>
        <position position="80"/>
    </location>
</feature>
<feature type="modified residue" description="N6-succinyllysine; alternate" evidence="10">
    <location>
        <position position="80"/>
    </location>
</feature>
<feature type="modified residue" description="Phosphothreonine" evidence="23">
    <location>
        <position position="81"/>
    </location>
</feature>
<feature type="modified residue" description="Phosphotyrosine" evidence="22 23">
    <location>
        <position position="89"/>
    </location>
</feature>
<feature type="modified residue" description="N6-(2-hydroxyisobutyryl)lysine; alternate" evidence="12">
    <location>
        <position position="92"/>
    </location>
</feature>
<feature type="modified residue" description="N6-acetyllysine; alternate" evidence="3">
    <location>
        <position position="92"/>
    </location>
</feature>
<feature type="modified residue" description="N6-butyryllysine; alternate" evidence="3">
    <location>
        <position position="92"/>
    </location>
</feature>
<feature type="modified residue" description="N6-glutaryllysine; alternate" evidence="3">
    <location>
        <position position="92"/>
    </location>
</feature>
<feature type="modified residue" description="N6-lactoyllysine; alternate" evidence="16">
    <location>
        <position position="92"/>
    </location>
</feature>
<feature type="modified residue" description="N6-propionyllysine; alternate" evidence="3">
    <location>
        <position position="92"/>
    </location>
</feature>
<feature type="modified residue" description="N6-succinyllysine; alternate" evidence="10 25">
    <location>
        <position position="92"/>
    </location>
</feature>
<feature type="cross-link" description="Glycyl lysine isopeptide (Lys-Gly) (interchain with G-Cter in SUMO2); alternate" evidence="3">
    <location>
        <position position="13"/>
    </location>
</feature>
<feature type="cross-link" description="Glycyl lysine isopeptide (Lys-Gly) (interchain with G-Cter in SUMO2); alternate" evidence="3">
    <location>
        <position position="21"/>
    </location>
</feature>
<feature type="cross-link" description="Glycyl lysine isopeptide (Lys-Gly) (interchain with G-Cter in SUMO2); alternate" evidence="3">
    <location>
        <position position="32"/>
    </location>
</feature>
<feature type="cross-link" description="Glycyl lysine isopeptide (Lys-Gly) (interchain with G-Cter in UFM1); alternate" evidence="3">
    <location>
        <position position="32"/>
    </location>
</feature>
<feature type="cross-link" description="Glycyl lysine isopeptide (Lys-Gly) (interchain with G-Cter in SUMO2); alternate" evidence="3">
    <location>
        <position position="60"/>
    </location>
</feature>
<feature type="cross-link" description="Glycyl lysine isopeptide (Lys-Gly) (interchain with G-Cter in SUMO2); alternate" evidence="3">
    <location>
        <position position="80"/>
    </location>
</feature>
<feature type="cross-link" description="Glycyl lysine isopeptide (Lys-Gly) (interchain with G-Cter in SUMO2); alternate" evidence="3">
    <location>
        <position position="92"/>
    </location>
</feature>
<feature type="cross-link" description="Glycyl lysine isopeptide (Lys-Gly) (interchain with G-Cter in ubiquitin); alternate" evidence="3">
    <location>
        <position position="92"/>
    </location>
</feature>
<feature type="sequence conflict" description="In Ref. 6; BAB26692." evidence="19" ref="6">
    <original>A</original>
    <variation>V</variation>
    <location>
        <position position="34"/>
    </location>
</feature>
<feature type="sequence conflict" description="In Ref. 6; BAB27698." evidence="19" ref="6">
    <original>K</original>
    <variation>E</variation>
    <location>
        <position position="80"/>
    </location>
</feature>
<feature type="sequence conflict" description="In Ref. 2; CAA31622." evidence="19" ref="2">
    <original>A</original>
    <variation>R</variation>
    <location>
        <position position="90"/>
    </location>
</feature>
<feature type="strand" evidence="26">
    <location>
        <begin position="21"/>
        <end position="23"/>
    </location>
</feature>
<feature type="helix" evidence="27">
    <location>
        <begin position="27"/>
        <end position="29"/>
    </location>
</feature>
<feature type="helix" evidence="27">
    <location>
        <begin position="32"/>
        <end position="41"/>
    </location>
</feature>
<feature type="helix" evidence="27">
    <location>
        <begin position="51"/>
        <end position="76"/>
    </location>
</feature>
<feature type="strand" evidence="27">
    <location>
        <begin position="80"/>
        <end position="82"/>
    </location>
</feature>
<feature type="helix" evidence="27">
    <location>
        <begin position="84"/>
        <end position="93"/>
    </location>
</feature>
<feature type="strand" evidence="27">
    <location>
        <begin position="97"/>
        <end position="101"/>
    </location>
</feature>
<evidence type="ECO:0000250" key="1"/>
<evidence type="ECO:0000250" key="2">
    <source>
        <dbReference type="UniProtKB" id="P62803"/>
    </source>
</evidence>
<evidence type="ECO:0000250" key="3">
    <source>
        <dbReference type="UniProtKB" id="P62805"/>
    </source>
</evidence>
<evidence type="ECO:0000256" key="4">
    <source>
        <dbReference type="SAM" id="MobiDB-lite"/>
    </source>
</evidence>
<evidence type="ECO:0000269" key="5">
    <source>
    </source>
</evidence>
<evidence type="ECO:0000269" key="6">
    <source>
    </source>
</evidence>
<evidence type="ECO:0000269" key="7">
    <source>
    </source>
</evidence>
<evidence type="ECO:0000269" key="8">
    <source>
    </source>
</evidence>
<evidence type="ECO:0000269" key="9">
    <source>
    </source>
</evidence>
<evidence type="ECO:0000269" key="10">
    <source>
    </source>
</evidence>
<evidence type="ECO:0000269" key="11">
    <source>
    </source>
</evidence>
<evidence type="ECO:0000269" key="12">
    <source>
    </source>
</evidence>
<evidence type="ECO:0000269" key="13">
    <source>
    </source>
</evidence>
<evidence type="ECO:0000269" key="14">
    <source>
    </source>
</evidence>
<evidence type="ECO:0000269" key="15">
    <source>
    </source>
</evidence>
<evidence type="ECO:0000269" key="16">
    <source>
    </source>
</evidence>
<evidence type="ECO:0000269" key="17">
    <source>
    </source>
</evidence>
<evidence type="ECO:0000269" key="18">
    <source>
    </source>
</evidence>
<evidence type="ECO:0000305" key="19"/>
<evidence type="ECO:0007744" key="20">
    <source>
        <dbReference type="PDB" id="4AU7"/>
    </source>
</evidence>
<evidence type="ECO:0007744" key="21">
    <source>
    </source>
</evidence>
<evidence type="ECO:0007744" key="22">
    <source>
    </source>
</evidence>
<evidence type="ECO:0007744" key="23">
    <source>
    </source>
</evidence>
<evidence type="ECO:0007744" key="24">
    <source>
    </source>
</evidence>
<evidence type="ECO:0007744" key="25">
    <source>
    </source>
</evidence>
<evidence type="ECO:0007829" key="26">
    <source>
        <dbReference type="PDB" id="4AU7"/>
    </source>
</evidence>
<evidence type="ECO:0007829" key="27">
    <source>
        <dbReference type="PDB" id="5B1M"/>
    </source>
</evidence>
<comment type="function">
    <text>Core component of nucleosome. Nucleosomes wrap and compact DNA into chromatin, limiting DNA accessibility to the cellular machineries which require DNA as a template. Histones thereby play a central role in transcription regulation, DNA repair, DNA replication and chromosomal stability. DNA accessibility is regulated via a complex set of post-translational modifications of histones, also called histone code, and nucleosome remodeling.</text>
</comment>
<comment type="subunit">
    <text evidence="3 5">The nucleosome is a histone octamer containing two molecules each of H2A, H2B, H3 and H4 assembled in one H3-H4 heterotetramer and two H2A-H2B heterodimers. The octamer wraps approximately 147 bp of DNA. Found in a co-chaperone complex with DNJC9, MCM2 and histone H3.3-H4 dimers (By similarity). Within the complex, interacts with DNJC9 (via C-terminus); the interaction is direct (By similarity). Interacts with NASP; NASP is a histone chaperone that stabilizes and maintains a soluble pool of Histone H3-H4 dimers (By similarity).</text>
</comment>
<comment type="interaction">
    <interactant intactId="EBI-299632">
        <id>P62806</id>
    </interactant>
    <interactant intactId="EBI-2944582">
        <id>Q8CDM1</id>
        <label>Atad2</label>
    </interactant>
    <organismsDiffer>false</organismsDiffer>
    <experiments>2</experiments>
</comment>
<comment type="interaction">
    <interactant intactId="EBI-299632">
        <id>P62806</id>
    </interactant>
    <interactant intactId="EBI-8321615">
        <id>Q9EQQ9</id>
        <label>Oga</label>
    </interactant>
    <organismsDiffer>false</organismsDiffer>
    <experiments>2</experiments>
</comment>
<comment type="subcellular location">
    <subcellularLocation>
        <location evidence="17">Nucleus</location>
    </subcellularLocation>
    <subcellularLocation>
        <location evidence="1">Chromosome</location>
    </subcellularLocation>
    <text evidence="17">Localized to the nucleus when acetylated in step 11 spermatids.</text>
</comment>
<comment type="tissue specificity">
    <text evidence="17">Expressed in step 11 and 12 spermatids (at protein level).</text>
</comment>
<comment type="PTM">
    <text evidence="3 17">Acetylation at Lys-6 (H4K5ac), Lys-9 (H4K8ac), Lys-13 (H4K12ac) and Lys-17 (H4K16ac) occurs in coding regions of the genome but not in heterochromatin. Acetylated as part of spermatogenesis progression prior to histone-to-protamine exchange (PubMed:32726616).</text>
</comment>
<comment type="PTM">
    <text evidence="6 7">Citrullination at Arg-4 (H4R3ci) by PADI4 impairs methylation.</text>
</comment>
<comment type="PTM">
    <text evidence="3">Monomethylation and asymmetric dimethylation at Arg-4 (H4R3me1 and H4R3me2a, respectively) by PRMT1 favors acetylation at Lys-9 (H4K8ac) and Lys-13 (H4K12ac). Demethylation is performed by JMJD6. Symmetric dimethylation on Arg-4 (H4R3me2s) by the PRDM1/PRMT5 complex may play a crucial role in the germ-cell lineage (By similarity).</text>
</comment>
<comment type="PTM">
    <text evidence="3 11">Monomethylated, dimethylated or trimethylated at Lys-21 (H4K20me1, H4K20me2, H4K20me3) (PubMed:24049080). Monomethylation is performed by KMT5A/SET8 (By similarity). Trimethylation is performed by KMT5B and KMT5C and induces gene silencing (PubMed:24049080). Monomethylated at Lys-13 (H4K12me1) by N6AMT1; H4K12me1 modification is present at the promoters of numerous genes encoding cell cycle regulators (By similarity).</text>
</comment>
<comment type="PTM">
    <text evidence="3">Acetyl-methylated at Lys-6 and Lys-13 (H4K5acme and H4K12acme, respectively), acetyl-methylation is an epigenetic mark of active chromatin associated with increased transcriptional initiation. Acetyl-methylation is formed by acetylation by EP300/p300 of lysine residues that are already monomethylated on the same side chain. H4K5acme and H4K12acme marks specifically bind BRD2.</text>
</comment>
<comment type="PTM">
    <text evidence="3">Phosphorylated by PAK2 at Ser-48 (H4S47ph). This phosphorylation increases the association of H3.3-H4 with the histone chaperone HIRA, thus promoting nucleosome assembly of H3.3-H4 and inhibiting nucleosome assembly of H3.1-H4 (By similarity).</text>
</comment>
<comment type="PTM">
    <text evidence="3 17">Ubiquitinated by the CUL4-DDB-RBX1 complex in response to ultraviolet irradiation. This may weaken the interaction between histones and DNA and facilitate DNA accessibility to repair proteins. Monoubiquitinated at Lys-92 of histone H4 (H4K91ub1) in response to DNA damage. The exact role of H4K91ub1 in DNA damage response is still unclear but it may function as a licensing signal for additional histone H4 post-translational modifications such as H4 Lys-21 methylation (H4K20me) (By similarity). Ubiquitinated; by PHF7 (PubMed:32726616).</text>
</comment>
<comment type="PTM">
    <text evidence="3">Sumoylated, which is associated with transcriptional repression.</text>
</comment>
<comment type="PTM">
    <text evidence="13">Butyrylation of histones marks active promoters and competes with histone acetylation. It is present during late spermatogenesis.</text>
</comment>
<comment type="PTM">
    <text evidence="14">Hydroxybutyrylation of histones is induced by starvation.</text>
</comment>
<comment type="PTM">
    <text evidence="9">Crotonylation (Kcr) is specifically present in male germ cells and marks testis-specific genes in post-meiotic cells, including X-linked genes that escape sex chromosome inactivation in haploid cells. Crotonylation marks active promoters and enhancers and confers resistance to transcriptional repressors. It is also associated with post-meiotically activated genes on autosomes.</text>
</comment>
<comment type="PTM">
    <text evidence="3">Glutarylation at Lys-92 (H4K91glu) destabilizes nucleosomes by promoting dissociation of the H2A-H2B dimers from nucleosomes.</text>
</comment>
<comment type="PTM">
    <text evidence="3">Ufmylated; monofmylated by UFL1 at Lys-32 (H4K31Ufm1) in response to DNA damage.</text>
</comment>
<comment type="PTM">
    <text evidence="3">Lactylated in macrophages by EP300/P300 by using lactoyl-CoA directly derived from endogenous or exogenous lactate, leading to stimulates gene transcription. Delactylated by SIRT3 at Lys-17 (H4K16la).</text>
</comment>
<comment type="similarity">
    <text evidence="19">Belongs to the histone H4 family.</text>
</comment>
<reference key="1">
    <citation type="journal article" date="1981" name="J. Mol. Biol.">
        <title>Structure and expression in L-cells of a cloned H4 histone gene of the mouse.</title>
        <authorList>
            <person name="Seiler-Tuyns A."/>
            <person name="Birnstiel M.L."/>
        </authorList>
    </citation>
    <scope>NUCLEOTIDE SEQUENCE [GENOMIC DNA]</scope>
</reference>
<reference key="2">
    <citation type="journal article" date="1989" name="Nucleic Acids Res.">
        <title>Nucleotide sequence of two mouse histone H4 genes.</title>
        <authorList>
            <person name="Meier V.S."/>
            <person name="Boehni R."/>
            <person name="Schuemperli D."/>
        </authorList>
    </citation>
    <scope>NUCLEOTIDE SEQUENCE [GENOMIC DNA] (H4C2 AND H4C3)</scope>
</reference>
<reference key="3">
    <citation type="journal article" date="1996" name="Genome Res.">
        <title>Characterization of the mouse histone gene cluster on chromosome 13: 45 histone genes in three patches spread over 1Mb.</title>
        <authorList>
            <person name="Wang Z.-F."/>
            <person name="Krasikov T."/>
            <person name="Frey M.R."/>
            <person name="Wang J."/>
            <person name="Matera A.G."/>
            <person name="Marzluff W.F."/>
        </authorList>
    </citation>
    <scope>NUCLEOTIDE SEQUENCE [GENOMIC DNA] (H4C1)</scope>
    <source>
        <strain>C57BL/6J</strain>
    </source>
</reference>
<reference key="4">
    <citation type="submission" date="1997-04" db="EMBL/GenBank/DDBJ databases">
        <authorList>
            <person name="Franke K."/>
            <person name="Drabent B."/>
            <person name="Doenecke D."/>
        </authorList>
    </citation>
    <scope>NUCLEOTIDE SEQUENCE [GENOMIC DNA]</scope>
    <source>
        <strain>129/Sv</strain>
    </source>
</reference>
<reference key="5">
    <citation type="journal article" date="2002" name="Genomics">
        <title>The human and mouse replication-dependent histone genes.</title>
        <authorList>
            <person name="Marzluff W.F."/>
            <person name="Gongidi P."/>
            <person name="Woods K.R."/>
            <person name="Jin J."/>
            <person name="Maltais L.J."/>
        </authorList>
    </citation>
    <scope>NUCLEOTIDE SEQUENCE [GENOMIC DNA] (H4C1; H4C2; H4C3; H4C4; H4C6; H4C8; H4C9; H4C11; H4C12; HIST1H4M; H4C14 AND H4C16)</scope>
</reference>
<reference key="6">
    <citation type="journal article" date="2005" name="Science">
        <title>The transcriptional landscape of the mammalian genome.</title>
        <authorList>
            <person name="Carninci P."/>
            <person name="Kasukawa T."/>
            <person name="Katayama S."/>
            <person name="Gough J."/>
            <person name="Frith M.C."/>
            <person name="Maeda N."/>
            <person name="Oyama R."/>
            <person name="Ravasi T."/>
            <person name="Lenhard B."/>
            <person name="Wells C."/>
            <person name="Kodzius R."/>
            <person name="Shimokawa K."/>
            <person name="Bajic V.B."/>
            <person name="Brenner S.E."/>
            <person name="Batalov S."/>
            <person name="Forrest A.R."/>
            <person name="Zavolan M."/>
            <person name="Davis M.J."/>
            <person name="Wilming L.G."/>
            <person name="Aidinis V."/>
            <person name="Allen J.E."/>
            <person name="Ambesi-Impiombato A."/>
            <person name="Apweiler R."/>
            <person name="Aturaliya R.N."/>
            <person name="Bailey T.L."/>
            <person name="Bansal M."/>
            <person name="Baxter L."/>
            <person name="Beisel K.W."/>
            <person name="Bersano T."/>
            <person name="Bono H."/>
            <person name="Chalk A.M."/>
            <person name="Chiu K.P."/>
            <person name="Choudhary V."/>
            <person name="Christoffels A."/>
            <person name="Clutterbuck D.R."/>
            <person name="Crowe M.L."/>
            <person name="Dalla E."/>
            <person name="Dalrymple B.P."/>
            <person name="de Bono B."/>
            <person name="Della Gatta G."/>
            <person name="di Bernardo D."/>
            <person name="Down T."/>
            <person name="Engstrom P."/>
            <person name="Fagiolini M."/>
            <person name="Faulkner G."/>
            <person name="Fletcher C.F."/>
            <person name="Fukushima T."/>
            <person name="Furuno M."/>
            <person name="Futaki S."/>
            <person name="Gariboldi M."/>
            <person name="Georgii-Hemming P."/>
            <person name="Gingeras T.R."/>
            <person name="Gojobori T."/>
            <person name="Green R.E."/>
            <person name="Gustincich S."/>
            <person name="Harbers M."/>
            <person name="Hayashi Y."/>
            <person name="Hensch T.K."/>
            <person name="Hirokawa N."/>
            <person name="Hill D."/>
            <person name="Huminiecki L."/>
            <person name="Iacono M."/>
            <person name="Ikeo K."/>
            <person name="Iwama A."/>
            <person name="Ishikawa T."/>
            <person name="Jakt M."/>
            <person name="Kanapin A."/>
            <person name="Katoh M."/>
            <person name="Kawasawa Y."/>
            <person name="Kelso J."/>
            <person name="Kitamura H."/>
            <person name="Kitano H."/>
            <person name="Kollias G."/>
            <person name="Krishnan S.P."/>
            <person name="Kruger A."/>
            <person name="Kummerfeld S.K."/>
            <person name="Kurochkin I.V."/>
            <person name="Lareau L.F."/>
            <person name="Lazarevic D."/>
            <person name="Lipovich L."/>
            <person name="Liu J."/>
            <person name="Liuni S."/>
            <person name="McWilliam S."/>
            <person name="Madan Babu M."/>
            <person name="Madera M."/>
            <person name="Marchionni L."/>
            <person name="Matsuda H."/>
            <person name="Matsuzawa S."/>
            <person name="Miki H."/>
            <person name="Mignone F."/>
            <person name="Miyake S."/>
            <person name="Morris K."/>
            <person name="Mottagui-Tabar S."/>
            <person name="Mulder N."/>
            <person name="Nakano N."/>
            <person name="Nakauchi H."/>
            <person name="Ng P."/>
            <person name="Nilsson R."/>
            <person name="Nishiguchi S."/>
            <person name="Nishikawa S."/>
            <person name="Nori F."/>
            <person name="Ohara O."/>
            <person name="Okazaki Y."/>
            <person name="Orlando V."/>
            <person name="Pang K.C."/>
            <person name="Pavan W.J."/>
            <person name="Pavesi G."/>
            <person name="Pesole G."/>
            <person name="Petrovsky N."/>
            <person name="Piazza S."/>
            <person name="Reed J."/>
            <person name="Reid J.F."/>
            <person name="Ring B.Z."/>
            <person name="Ringwald M."/>
            <person name="Rost B."/>
            <person name="Ruan Y."/>
            <person name="Salzberg S.L."/>
            <person name="Sandelin A."/>
            <person name="Schneider C."/>
            <person name="Schoenbach C."/>
            <person name="Sekiguchi K."/>
            <person name="Semple C.A."/>
            <person name="Seno S."/>
            <person name="Sessa L."/>
            <person name="Sheng Y."/>
            <person name="Shibata Y."/>
            <person name="Shimada H."/>
            <person name="Shimada K."/>
            <person name="Silva D."/>
            <person name="Sinclair B."/>
            <person name="Sperling S."/>
            <person name="Stupka E."/>
            <person name="Sugiura K."/>
            <person name="Sultana R."/>
            <person name="Takenaka Y."/>
            <person name="Taki K."/>
            <person name="Tammoja K."/>
            <person name="Tan S.L."/>
            <person name="Tang S."/>
            <person name="Taylor M.S."/>
            <person name="Tegner J."/>
            <person name="Teichmann S.A."/>
            <person name="Ueda H.R."/>
            <person name="van Nimwegen E."/>
            <person name="Verardo R."/>
            <person name="Wei C.L."/>
            <person name="Yagi K."/>
            <person name="Yamanishi H."/>
            <person name="Zabarovsky E."/>
            <person name="Zhu S."/>
            <person name="Zimmer A."/>
            <person name="Hide W."/>
            <person name="Bult C."/>
            <person name="Grimmond S.M."/>
            <person name="Teasdale R.D."/>
            <person name="Liu E.T."/>
            <person name="Brusic V."/>
            <person name="Quackenbush J."/>
            <person name="Wahlestedt C."/>
            <person name="Mattick J.S."/>
            <person name="Hume D.A."/>
            <person name="Kai C."/>
            <person name="Sasaki D."/>
            <person name="Tomaru Y."/>
            <person name="Fukuda S."/>
            <person name="Kanamori-Katayama M."/>
            <person name="Suzuki M."/>
            <person name="Aoki J."/>
            <person name="Arakawa T."/>
            <person name="Iida J."/>
            <person name="Imamura K."/>
            <person name="Itoh M."/>
            <person name="Kato T."/>
            <person name="Kawaji H."/>
            <person name="Kawagashira N."/>
            <person name="Kawashima T."/>
            <person name="Kojima M."/>
            <person name="Kondo S."/>
            <person name="Konno H."/>
            <person name="Nakano K."/>
            <person name="Ninomiya N."/>
            <person name="Nishio T."/>
            <person name="Okada M."/>
            <person name="Plessy C."/>
            <person name="Shibata K."/>
            <person name="Shiraki T."/>
            <person name="Suzuki S."/>
            <person name="Tagami M."/>
            <person name="Waki K."/>
            <person name="Watahiki A."/>
            <person name="Okamura-Oho Y."/>
            <person name="Suzuki H."/>
            <person name="Kawai J."/>
            <person name="Hayashizaki Y."/>
        </authorList>
    </citation>
    <scope>NUCLEOTIDE SEQUENCE [LARGE SCALE MRNA]</scope>
    <source>
        <strain>C57BL/6J</strain>
        <tissue>Egg</tissue>
        <tissue>Pancreas</tissue>
        <tissue>Tongue</tissue>
    </source>
</reference>
<reference key="7">
    <citation type="journal article" date="2009" name="PLoS Biol.">
        <title>Lineage-specific biology revealed by a finished genome assembly of the mouse.</title>
        <authorList>
            <person name="Church D.M."/>
            <person name="Goodstadt L."/>
            <person name="Hillier L.W."/>
            <person name="Zody M.C."/>
            <person name="Goldstein S."/>
            <person name="She X."/>
            <person name="Bult C.J."/>
            <person name="Agarwala R."/>
            <person name="Cherry J.L."/>
            <person name="DiCuccio M."/>
            <person name="Hlavina W."/>
            <person name="Kapustin Y."/>
            <person name="Meric P."/>
            <person name="Maglott D."/>
            <person name="Birtle Z."/>
            <person name="Marques A.C."/>
            <person name="Graves T."/>
            <person name="Zhou S."/>
            <person name="Teague B."/>
            <person name="Potamousis K."/>
            <person name="Churas C."/>
            <person name="Place M."/>
            <person name="Herschleb J."/>
            <person name="Runnheim R."/>
            <person name="Forrest D."/>
            <person name="Amos-Landgraf J."/>
            <person name="Schwartz D.C."/>
            <person name="Cheng Z."/>
            <person name="Lindblad-Toh K."/>
            <person name="Eichler E.E."/>
            <person name="Ponting C.P."/>
        </authorList>
    </citation>
    <scope>NUCLEOTIDE SEQUENCE [LARGE SCALE GENOMIC DNA]</scope>
    <source>
        <strain>C57BL/6J</strain>
    </source>
</reference>
<reference key="8">
    <citation type="journal article" date="2004" name="Genome Res.">
        <title>The status, quality, and expansion of the NIH full-length cDNA project: the Mammalian Gene Collection (MGC).</title>
        <authorList>
            <consortium name="The MGC Project Team"/>
        </authorList>
    </citation>
    <scope>NUCLEOTIDE SEQUENCE [LARGE SCALE MRNA]</scope>
    <source>
        <strain>C57BL/6J</strain>
        <tissue>Brain</tissue>
        <tissue>Embryo</tissue>
        <tissue>Eye</tissue>
        <tissue>Heart</tissue>
        <tissue>Mammary gland</tissue>
        <tissue>Testis</tissue>
    </source>
</reference>
<reference key="9">
    <citation type="journal article" date="2004" name="Genes Dev.">
        <title>A silencing pathway to induce H3-K9 and H4-K20 trimethylation at constitutive heterochromatin.</title>
        <authorList>
            <person name="Schotta G."/>
            <person name="Lachner M."/>
            <person name="Sarma K."/>
            <person name="Ebert A."/>
            <person name="Sengupta R."/>
            <person name="Reuter G."/>
            <person name="Reinberg D."/>
            <person name="Jenuwein T."/>
        </authorList>
    </citation>
    <scope>METHYLATION AT LYS-21</scope>
</reference>
<reference key="10">
    <citation type="journal article" date="2006" name="Genes Dev.">
        <title>Phosphorylation of histone H4 Ser1 regulates sporulation in yeast and is conserved in fly and mouse spermatogenesis.</title>
        <authorList>
            <person name="Krishnamoorthy T."/>
            <person name="Chen X."/>
            <person name="Govin J."/>
            <person name="Cheung W.L."/>
            <person name="Dorsey J."/>
            <person name="Schindler K."/>
            <person name="Winter E."/>
            <person name="Allis C.D."/>
            <person name="Guacci V."/>
            <person name="Khochbin S."/>
            <person name="Fuller M.T."/>
            <person name="Berger S.L."/>
        </authorList>
    </citation>
    <scope>PHOSPHORYLATION AT SER-2</scope>
</reference>
<reference key="11">
    <citation type="journal article" date="2006" name="Nat. Cell Biol.">
        <title>Blimp1 associates with Prmt5 and directs histone arginine methylation in mouse germ cells.</title>
        <authorList>
            <person name="Ancelin K."/>
            <person name="Lange U.C."/>
            <person name="Hajkova P."/>
            <person name="Schneider R."/>
            <person name="Bannister A.J."/>
            <person name="Kouzarides T."/>
            <person name="Surani M.A."/>
        </authorList>
    </citation>
    <scope>METHYLATION AT ARG-4</scope>
</reference>
<reference key="12">
    <citation type="journal article" date="2007" name="J. Immunol.">
        <title>Quantitative time-resolved phosphoproteomic analysis of mast cell signaling.</title>
        <authorList>
            <person name="Cao L."/>
            <person name="Yu K."/>
            <person name="Banh C."/>
            <person name="Nguyen V."/>
            <person name="Ritz A."/>
            <person name="Raphael B.J."/>
            <person name="Kawakami Y."/>
            <person name="Kawakami T."/>
            <person name="Salomon A.R."/>
        </authorList>
    </citation>
    <scope>PHOSPHORYLATION [LARGE SCALE ANALYSIS] AT TYR-52</scope>
    <scope>IDENTIFICATION BY MASS SPECTROMETRY [LARGE SCALE ANALYSIS]</scope>
    <source>
        <tissue>Mast cell</tissue>
    </source>
</reference>
<reference key="13">
    <citation type="journal article" date="2008" name="J. Proteome Res.">
        <title>Large-scale identification and evolution indexing of tyrosine phosphorylation sites from murine brain.</title>
        <authorList>
            <person name="Ballif B.A."/>
            <person name="Carey G.R."/>
            <person name="Sunyaev S.R."/>
            <person name="Gygi S.P."/>
        </authorList>
    </citation>
    <scope>PHOSPHORYLATION [LARGE SCALE ANALYSIS] AT TYR-52 AND TYR-89</scope>
    <scope>IDENTIFICATION BY MASS SPECTROMETRY [LARGE SCALE ANALYSIS]</scope>
    <source>
        <tissue>Brain</tissue>
    </source>
</reference>
<reference key="14">
    <citation type="journal article" date="2010" name="Cell">
        <title>A tissue-specific atlas of mouse protein phosphorylation and expression.</title>
        <authorList>
            <person name="Huttlin E.L."/>
            <person name="Jedrychowski M.P."/>
            <person name="Elias J.E."/>
            <person name="Goswami T."/>
            <person name="Rad R."/>
            <person name="Beausoleil S.A."/>
            <person name="Villen J."/>
            <person name="Haas W."/>
            <person name="Sowa M.E."/>
            <person name="Gygi S.P."/>
        </authorList>
    </citation>
    <scope>PHOSPHORYLATION [LARGE SCALE ANALYSIS] AT SER-48; TYR-52; THR-81 AND TYR-89</scope>
    <scope>IDENTIFICATION BY MASS SPECTROMETRY [LARGE SCALE ANALYSIS]</scope>
    <source>
        <tissue>Brain</tissue>
        <tissue>Brown adipose tissue</tissue>
        <tissue>Heart</tissue>
        <tissue>Kidney</tissue>
        <tissue>Liver</tissue>
        <tissue>Lung</tissue>
        <tissue>Pancreas</tissue>
        <tissue>Spleen</tissue>
        <tissue>Testis</tissue>
    </source>
</reference>
<reference key="15">
    <citation type="journal article" date="2011" name="Cell">
        <title>Identification of 67 histone marks and histone lysine crotonylation as a new type of histone modification.</title>
        <authorList>
            <person name="Tan M."/>
            <person name="Luo H."/>
            <person name="Lee S."/>
            <person name="Jin F."/>
            <person name="Yang J.S."/>
            <person name="Montellier E."/>
            <person name="Buchou T."/>
            <person name="Cheng Z."/>
            <person name="Rousseaux S."/>
            <person name="Rajagopal N."/>
            <person name="Lu Z."/>
            <person name="Ye Z."/>
            <person name="Zhu Q."/>
            <person name="Wysocka J."/>
            <person name="Ye Y."/>
            <person name="Khochbin S."/>
            <person name="Ren B."/>
            <person name="Zhao Y."/>
        </authorList>
    </citation>
    <scope>CROTONYLATION AT LYS-6; LYS-9 AND LYS-17</scope>
</reference>
<reference key="16">
    <citation type="journal article" date="2012" name="Mol. Cell. Proteomics">
        <title>Lysine succinylation and lysine malonylation in histones.</title>
        <authorList>
            <person name="Xie Z."/>
            <person name="Dai J."/>
            <person name="Dai L."/>
            <person name="Tan M."/>
            <person name="Cheng Z."/>
            <person name="Wu Y."/>
            <person name="Boeke J.D."/>
            <person name="Zhao Y."/>
        </authorList>
    </citation>
    <scope>SUCCINYLATION AT LYS-32; LYS-78; LYS-80 AND LYS-92</scope>
</reference>
<reference key="17">
    <citation type="journal article" date="2013" name="Mol. Cell">
        <title>SIRT5-mediated lysine desuccinylation impacts diverse metabolic pathways.</title>
        <authorList>
            <person name="Park J."/>
            <person name="Chen Y."/>
            <person name="Tishkoff D.X."/>
            <person name="Peng C."/>
            <person name="Tan M."/>
            <person name="Dai L."/>
            <person name="Xie Z."/>
            <person name="Zhang Y."/>
            <person name="Zwaans B.M."/>
            <person name="Skinner M.E."/>
            <person name="Lombard D.B."/>
            <person name="Zhao Y."/>
        </authorList>
    </citation>
    <scope>ACETYLATION [LARGE SCALE ANALYSIS] AT LYS-6; LYS-9; LYS-13; LYS-17 AND LYS-32</scope>
    <scope>SUCCINYLATION [LARGE SCALE ANALYSIS] AT LYS-92</scope>
    <scope>IDENTIFICATION BY MASS SPECTROMETRY [LARGE SCALE ANALYSIS]</scope>
    <source>
        <tissue>Embryonic fibroblast</tissue>
    </source>
</reference>
<reference key="18">
    <citation type="journal article" date="2013" name="Proc. Natl. Acad. Sci. U.S.A.">
        <title>Label-free quantitative proteomics of the lysine acetylome in mitochondria identifies substrates of SIRT3 in metabolic pathways.</title>
        <authorList>
            <person name="Rardin M.J."/>
            <person name="Newman J.C."/>
            <person name="Held J.M."/>
            <person name="Cusack M.P."/>
            <person name="Sorensen D.J."/>
            <person name="Li B."/>
            <person name="Schilling B."/>
            <person name="Mooney S.D."/>
            <person name="Kahn C.R."/>
            <person name="Verdin E."/>
            <person name="Gibson B.W."/>
        </authorList>
    </citation>
    <scope>ACETYLATION [LARGE SCALE ANALYSIS] AT LYS-6; LYS-9; LYS-13 AND LYS-17</scope>
    <scope>IDENTIFICATION BY MASS SPECTROMETRY [LARGE SCALE ANALYSIS]</scope>
    <source>
        <tissue>Liver</tissue>
    </source>
</reference>
<reference key="19">
    <citation type="journal article" date="2014" name="Nat. Chem. Biol.">
        <title>Lysine 2-hydroxyisobutyrylation is a widely distributed active histone mark.</title>
        <authorList>
            <person name="Dai L."/>
            <person name="Peng C."/>
            <person name="Montellier E."/>
            <person name="Lu Z."/>
            <person name="Chen Y."/>
            <person name="Ishii H."/>
            <person name="Debernardi A."/>
            <person name="Buchou T."/>
            <person name="Rousseaux S."/>
            <person name="Jin F."/>
            <person name="Sabari B.R."/>
            <person name="Deng Z."/>
            <person name="Allis C.D."/>
            <person name="Ren B."/>
            <person name="Khochbin S."/>
            <person name="Zhao Y."/>
        </authorList>
    </citation>
    <scope>HYDROXYBUTYRYLATION AT LYS-6; LYS-9; LYS-13; LYS-17; LYS-32; LYS-45; LYS-60; LYS-78; LYS-80 AND LYS-92</scope>
</reference>
<reference key="20">
    <citation type="journal article" date="2016" name="Mol. Cell">
        <title>Dynamic competing histone H4 K5K8 acetylation and butyrylation are hallmarks of highly active gene promoters.</title>
        <authorList>
            <person name="Goudarzi A."/>
            <person name="Zhang D."/>
            <person name="Huang H."/>
            <person name="Barral S."/>
            <person name="Kwon O.K."/>
            <person name="Qi S."/>
            <person name="Tang Z."/>
            <person name="Buchou T."/>
            <person name="Vitte A.L."/>
            <person name="He T."/>
            <person name="Cheng Z."/>
            <person name="Montellier E."/>
            <person name="Gaucher J."/>
            <person name="Curtet S."/>
            <person name="Debernardi A."/>
            <person name="Charbonnier G."/>
            <person name="Puthier D."/>
            <person name="Petosa C."/>
            <person name="Panne D."/>
            <person name="Rousseaux S."/>
            <person name="Roeder R.G."/>
            <person name="Zhao Y."/>
            <person name="Khochbin S."/>
        </authorList>
    </citation>
    <scope>BUTYRYLATION AT LYS-6; LYS-9 AND LYS-13</scope>
</reference>
<reference key="21">
    <citation type="journal article" date="2016" name="Mol. Cell">
        <title>Metabolic regulation of gene expression by histone lysine beta-hydroxybutyrylation.</title>
        <authorList>
            <person name="Xie Z."/>
            <person name="Zhang D."/>
            <person name="Chung D."/>
            <person name="Tang Z."/>
            <person name="Huang H."/>
            <person name="Dai L."/>
            <person name="Qi S."/>
            <person name="Li J."/>
            <person name="Colak G."/>
            <person name="Chen Y."/>
            <person name="Xia C."/>
            <person name="Peng C."/>
            <person name="Ruan H."/>
            <person name="Kirkey M."/>
            <person name="Wang D."/>
            <person name="Jensen L.M."/>
            <person name="Kwon O.K."/>
            <person name="Lee S."/>
            <person name="Pletcher S.D."/>
            <person name="Tan M."/>
            <person name="Lombard D.B."/>
            <person name="White K.P."/>
            <person name="Zhao H."/>
            <person name="Li J."/>
            <person name="Roeder R.G."/>
            <person name="Yang X."/>
            <person name="Zhao Y."/>
        </authorList>
    </citation>
    <scope>HYDROXYBUTYRYLATION AT LYS-6; LYS-9 AND LYS-13</scope>
</reference>
<reference key="22">
    <citation type="journal article" date="2018" name="Sci. Rep.">
        <title>Histone deacetylase (HDAC) 1 and 2 complexes regulate both histone acetylation and crotonylation in vivo.</title>
        <authorList>
            <person name="Kelly R.D.W."/>
            <person name="Chandru A."/>
            <person name="Watson P.J."/>
            <person name="Song Y."/>
            <person name="Blades M."/>
            <person name="Robertson N.S."/>
            <person name="Jamieson A.G."/>
            <person name="Schwabe J.W.R."/>
            <person name="Cowley S.M."/>
        </authorList>
    </citation>
    <scope>ACETYLATION AT LYS-17</scope>
</reference>
<reference key="23">
    <citation type="journal article" date="2019" name="Nature">
        <title>Metabolic regulation of gene expression by histone lactylation.</title>
        <authorList>
            <person name="Zhang D."/>
            <person name="Tang Z."/>
            <person name="Huang H."/>
            <person name="Zhou G."/>
            <person name="Cui C."/>
            <person name="Weng Y."/>
            <person name="Liu W."/>
            <person name="Kim S."/>
            <person name="Lee S."/>
            <person name="Perez-Neut M."/>
            <person name="Ding J."/>
            <person name="Czyz D."/>
            <person name="Hu R."/>
            <person name="Ye Z."/>
            <person name="He M."/>
            <person name="Zheng Y.G."/>
            <person name="Shuman H.A."/>
            <person name="Dai L."/>
            <person name="Ren B."/>
            <person name="Roeder R.G."/>
            <person name="Becker L."/>
            <person name="Zhao Y."/>
        </authorList>
    </citation>
    <scope>LACTYLATION AT LYS-9; LYS-13; LYS-32 AND LYS-92</scope>
</reference>
<reference key="24">
    <citation type="journal article" date="2020" name="Cell Rep.">
        <title>PHF7 Modulates BRDT Stability and Histone-to-Protamine Exchange during Spermiogenesis.</title>
        <authorList>
            <person name="Kim C.R."/>
            <person name="Noda T."/>
            <person name="Kim H."/>
            <person name="Kim G."/>
            <person name="Park S."/>
            <person name="Na Y."/>
            <person name="Oura S."/>
            <person name="Shimada K."/>
            <person name="Bang I."/>
            <person name="Ahn J.Y."/>
            <person name="Kim Y.R."/>
            <person name="Oh S.K."/>
            <person name="Choi H.J."/>
            <person name="Kim J.S."/>
            <person name="Jung I."/>
            <person name="Lee H."/>
            <person name="Okada Y."/>
            <person name="Ikawa M."/>
            <person name="Baek S.H."/>
        </authorList>
    </citation>
    <scope>SUBCELLULAR LOCATION</scope>
    <scope>TISSUE SPECIFICITY</scope>
    <scope>ACETYLATION</scope>
    <scope>UBIQUITINATION BY PHF7</scope>
</reference>
<reference key="25">
    <citation type="journal article" date="2023" name="Nature">
        <title>Acetyl-methyllysine marks chromatin at active transcription start sites.</title>
        <authorList>
            <person name="Lu-Culligan W.J."/>
            <person name="Connor L.J."/>
            <person name="Xie Y."/>
            <person name="Ekundayo B.E."/>
            <person name="Rose B.T."/>
            <person name="Machyna M."/>
            <person name="Pintado-Urbanc A.P."/>
            <person name="Zimmer J.T."/>
            <person name="Vock I.W."/>
            <person name="Bhanu N.V."/>
            <person name="King M.C."/>
            <person name="Garcia B.A."/>
            <person name="Bleichert F."/>
            <person name="Simon M.D."/>
        </authorList>
    </citation>
    <scope>ACETYLATION AT LYS-6 AND LYS-13</scope>
    <scope>METHYLATION AT LYS-6 AND LYS-13</scope>
</reference>
<reference key="26">
    <citation type="journal article" date="2000" name="Nat. Struct. Biol.">
        <title>Crystal structure of a nucleosome core particle containing the variant histone H2A.Z.</title>
        <authorList>
            <person name="Suto R.K."/>
            <person name="Clarkson M.J."/>
            <person name="Tremethick D.J."/>
            <person name="Luger K."/>
        </authorList>
    </citation>
    <scope>X-RAY CRYSTALLOGRAPHY (2.6 ANGSTROMS) IN COMPLEX WITH H2A-Z; H2B AND H3</scope>
</reference>
<reference evidence="20" key="27">
    <citation type="journal article" date="2014" name="Nucleic Acids Res.">
        <title>A novel route to product specificity in the Suv4-20 family of histone H4K20 methyltransferases.</title>
        <authorList>
            <person name="Southall S.M."/>
            <person name="Cronin N.B."/>
            <person name="Wilson J.R."/>
        </authorList>
    </citation>
    <scope>X-RAY CRYSTALLOGRAPHY (2.07 ANGSTROMS) OF 18-26 IN COMPLEX WITH KMT5C</scope>
    <scope>METHYLATION AT LYS-21</scope>
</reference>
<accession>P62806</accession>
<accession>A0AUM5</accession>
<accession>A4FUP8</accession>
<accession>A4QMY0</accession>
<accession>P02304</accession>
<accession>P02305</accession>
<accession>Q0VDL9</accession>
<accession>Q2M2Q5</accession>
<accession>Q5T006</accession>
<accession>Q6PDS7</accession>
<accession>Q811M0</accession>
<accession>Q9D0C9</accession>
<accession>Q9D6Q8</accession>
<keyword id="KW-0002">3D-structure</keyword>
<keyword id="KW-0007">Acetylation</keyword>
<keyword id="KW-0158">Chromosome</keyword>
<keyword id="KW-0164">Citrullination</keyword>
<keyword id="KW-0238">DNA-binding</keyword>
<keyword id="KW-0379">Hydroxylation</keyword>
<keyword id="KW-1017">Isopeptide bond</keyword>
<keyword id="KW-0488">Methylation</keyword>
<keyword id="KW-0544">Nucleosome core</keyword>
<keyword id="KW-0539">Nucleus</keyword>
<keyword id="KW-0597">Phosphoprotein</keyword>
<keyword id="KW-1185">Reference proteome</keyword>
<keyword id="KW-0832">Ubl conjugation</keyword>
<organism>
    <name type="scientific">Mus musculus</name>
    <name type="common">Mouse</name>
    <dbReference type="NCBI Taxonomy" id="10090"/>
    <lineage>
        <taxon>Eukaryota</taxon>
        <taxon>Metazoa</taxon>
        <taxon>Chordata</taxon>
        <taxon>Craniata</taxon>
        <taxon>Vertebrata</taxon>
        <taxon>Euteleostomi</taxon>
        <taxon>Mammalia</taxon>
        <taxon>Eutheria</taxon>
        <taxon>Euarchontoglires</taxon>
        <taxon>Glires</taxon>
        <taxon>Rodentia</taxon>
        <taxon>Myomorpha</taxon>
        <taxon>Muroidea</taxon>
        <taxon>Muridae</taxon>
        <taxon>Murinae</taxon>
        <taxon>Mus</taxon>
        <taxon>Mus</taxon>
    </lineage>
</organism>
<gene>
    <name type="primary">H4c1</name>
    <name type="synonym">Hist1h4a</name>
</gene>
<gene>
    <name type="primary">H4c2</name>
    <name type="synonym">H4-53</name>
    <name type="synonym">Hist1h4b</name>
</gene>
<gene>
    <name type="primary">H4c3</name>
    <name type="synonym">H4-12</name>
    <name type="synonym">Hist1h4c</name>
</gene>
<gene>
    <name type="primary">H4c4</name>
    <name type="synonym">Hist1h4d</name>
</gene>
<gene>
    <name type="primary">H4c6</name>
    <name type="synonym">Hist1h4f</name>
</gene>
<gene>
    <name type="primary">H4c8</name>
    <name type="synonym">Hist1h4h</name>
</gene>
<gene>
    <name type="primary">H4c9</name>
    <name type="synonym">Hist1h4i</name>
</gene>
<gene>
    <name type="primary">H4c11</name>
    <name type="synonym">Hist1h4j</name>
</gene>
<gene>
    <name type="primary">H4c12</name>
    <name type="synonym">Hist1h4k</name>
</gene>
<gene>
    <name type="primary">Hist1h4m</name>
</gene>
<gene>
    <name type="primary">H4c14</name>
    <name type="synonym">Hist2h4</name>
    <name type="synonym">Hist2h4a</name>
</gene>
<gene>
    <name type="primary">H4c16</name>
    <name type="synonym">H4f16</name>
    <name type="synonym">Hist4h4</name>
</gene>
<protein>
    <recommendedName>
        <fullName>Histone H4</fullName>
    </recommendedName>
</protein>
<proteinExistence type="evidence at protein level"/>
<dbReference type="EMBL" id="V00753">
    <property type="protein sequence ID" value="CAA24130.1"/>
    <property type="molecule type" value="Genomic_DNA"/>
</dbReference>
<dbReference type="EMBL" id="X13235">
    <property type="protein sequence ID" value="CAA31621.1"/>
    <property type="molecule type" value="Genomic_DNA"/>
</dbReference>
<dbReference type="EMBL" id="X13236">
    <property type="protein sequence ID" value="CAA31622.1"/>
    <property type="molecule type" value="Genomic_DNA"/>
</dbReference>
<dbReference type="EMBL" id="U62672">
    <property type="protein sequence ID" value="AAB04766.1"/>
    <property type="molecule type" value="Genomic_DNA"/>
</dbReference>
<dbReference type="EMBL" id="Y12290">
    <property type="protein sequence ID" value="CAA72967.1"/>
    <property type="molecule type" value="Genomic_DNA"/>
</dbReference>
<dbReference type="EMBL" id="AY158956">
    <property type="protein sequence ID" value="AAO06266.1"/>
    <property type="molecule type" value="Genomic_DNA"/>
</dbReference>
<dbReference type="EMBL" id="AY158957">
    <property type="protein sequence ID" value="AAO06267.1"/>
    <property type="molecule type" value="Genomic_DNA"/>
</dbReference>
<dbReference type="EMBL" id="AY158958">
    <property type="protein sequence ID" value="AAO06268.1"/>
    <property type="molecule type" value="Genomic_DNA"/>
</dbReference>
<dbReference type="EMBL" id="AY158959">
    <property type="protein sequence ID" value="AAO06269.1"/>
    <property type="molecule type" value="Genomic_DNA"/>
</dbReference>
<dbReference type="EMBL" id="AY158960">
    <property type="protein sequence ID" value="AAO06270.1"/>
    <property type="molecule type" value="Genomic_DNA"/>
</dbReference>
<dbReference type="EMBL" id="AY158961">
    <property type="protein sequence ID" value="AAO06271.1"/>
    <property type="molecule type" value="Genomic_DNA"/>
</dbReference>
<dbReference type="EMBL" id="AY158962">
    <property type="protein sequence ID" value="AAO06272.1"/>
    <property type="molecule type" value="Genomic_DNA"/>
</dbReference>
<dbReference type="EMBL" id="AY158963">
    <property type="protein sequence ID" value="AAO06273.1"/>
    <property type="molecule type" value="Genomic_DNA"/>
</dbReference>
<dbReference type="EMBL" id="AY158964">
    <property type="protein sequence ID" value="AAO06274.1"/>
    <property type="molecule type" value="Genomic_DNA"/>
</dbReference>
<dbReference type="EMBL" id="AY158965">
    <property type="protein sequence ID" value="AAO06275.1"/>
    <property type="molecule type" value="Genomic_DNA"/>
</dbReference>
<dbReference type="EMBL" id="AY158966">
    <property type="protein sequence ID" value="AAO06276.1"/>
    <property type="molecule type" value="Genomic_DNA"/>
</dbReference>
<dbReference type="EMBL" id="AY158967">
    <property type="protein sequence ID" value="AAO06277.1"/>
    <property type="molecule type" value="Genomic_DNA"/>
</dbReference>
<dbReference type="EMBL" id="AK007642">
    <property type="protein sequence ID" value="BAB25157.1"/>
    <property type="molecule type" value="mRNA"/>
</dbReference>
<dbReference type="EMBL" id="AK010085">
    <property type="protein sequence ID" value="BAB26692.1"/>
    <property type="molecule type" value="mRNA"/>
</dbReference>
<dbReference type="EMBL" id="AK011560">
    <property type="protein sequence ID" value="BAB27698.1"/>
    <property type="molecule type" value="mRNA"/>
</dbReference>
<dbReference type="EMBL" id="AK139521">
    <property type="protein sequence ID" value="BAE24047.1"/>
    <property type="molecule type" value="mRNA"/>
</dbReference>
<dbReference type="EMBL" id="AL589651">
    <property type="status" value="NOT_ANNOTATED_CDS"/>
    <property type="molecule type" value="Genomic_DNA"/>
</dbReference>
<dbReference type="EMBL" id="AL590388">
    <property type="status" value="NOT_ANNOTATED_CDS"/>
    <property type="molecule type" value="Genomic_DNA"/>
</dbReference>
<dbReference type="EMBL" id="AL590614">
    <property type="status" value="NOT_ANNOTATED_CDS"/>
    <property type="molecule type" value="Genomic_DNA"/>
</dbReference>
<dbReference type="EMBL" id="BC028550">
    <property type="protein sequence ID" value="AAH28550.3"/>
    <property type="molecule type" value="mRNA"/>
</dbReference>
<dbReference type="EMBL" id="BC052219">
    <property type="status" value="NOT_ANNOTATED_CDS"/>
    <property type="molecule type" value="mRNA"/>
</dbReference>
<dbReference type="EMBL" id="BC057955">
    <property type="protein sequence ID" value="AAH57955.1"/>
    <property type="molecule type" value="mRNA"/>
</dbReference>
<dbReference type="EMBL" id="BC058529">
    <property type="protein sequence ID" value="AAH58529.2"/>
    <property type="molecule type" value="mRNA"/>
</dbReference>
<dbReference type="EMBL" id="BC087952">
    <property type="protein sequence ID" value="AAH87952.1"/>
    <property type="molecule type" value="mRNA"/>
</dbReference>
<dbReference type="EMBL" id="BC092144">
    <property type="protein sequence ID" value="AAH92144.1"/>
    <property type="molecule type" value="mRNA"/>
</dbReference>
<dbReference type="EMBL" id="BC115446">
    <property type="protein sequence ID" value="AAI15447.1"/>
    <property type="molecule type" value="mRNA"/>
</dbReference>
<dbReference type="EMBL" id="BC115447">
    <property type="protein sequence ID" value="AAI15448.1"/>
    <property type="molecule type" value="mRNA"/>
</dbReference>
<dbReference type="EMBL" id="BC115451">
    <property type="protein sequence ID" value="AAI15452.1"/>
    <property type="molecule type" value="mRNA"/>
</dbReference>
<dbReference type="EMBL" id="BC115448">
    <property type="protein sequence ID" value="AAI15449.1"/>
    <property type="molecule type" value="mRNA"/>
</dbReference>
<dbReference type="EMBL" id="BC115449">
    <property type="protein sequence ID" value="AAI15450.1"/>
    <property type="molecule type" value="mRNA"/>
</dbReference>
<dbReference type="EMBL" id="BC115450">
    <property type="protein sequence ID" value="AAI15451.1"/>
    <property type="molecule type" value="mRNA"/>
</dbReference>
<dbReference type="EMBL" id="BC117010">
    <property type="protein sequence ID" value="AAI17011.1"/>
    <property type="molecule type" value="mRNA"/>
</dbReference>
<dbReference type="EMBL" id="BC117012">
    <property type="protein sequence ID" value="AAI17013.1"/>
    <property type="molecule type" value="mRNA"/>
</dbReference>
<dbReference type="EMBL" id="BC111813">
    <property type="protein sequence ID" value="AAI11814.1"/>
    <property type="molecule type" value="mRNA"/>
</dbReference>
<dbReference type="EMBL" id="BC119241">
    <property type="protein sequence ID" value="AAI19242.1"/>
    <property type="molecule type" value="mRNA"/>
</dbReference>
<dbReference type="EMBL" id="BC119243">
    <property type="protein sequence ID" value="AAI19244.1"/>
    <property type="molecule type" value="mRNA"/>
</dbReference>
<dbReference type="EMBL" id="BC119611">
    <property type="protein sequence ID" value="AAI19612.1"/>
    <property type="molecule type" value="mRNA"/>
</dbReference>
<dbReference type="EMBL" id="BC119612">
    <property type="protein sequence ID" value="AAI19613.1"/>
    <property type="molecule type" value="mRNA"/>
</dbReference>
<dbReference type="EMBL" id="BC125598">
    <property type="protein sequence ID" value="AAI25599.1"/>
    <property type="molecule type" value="mRNA"/>
</dbReference>
<dbReference type="EMBL" id="BC125600">
    <property type="protein sequence ID" value="AAI25601.1"/>
    <property type="molecule type" value="mRNA"/>
</dbReference>
<dbReference type="EMBL" id="BC132186">
    <property type="protein sequence ID" value="AAI32187.1"/>
    <property type="molecule type" value="mRNA"/>
</dbReference>
<dbReference type="EMBL" id="BC132212">
    <property type="protein sequence ID" value="AAI32213.1"/>
    <property type="molecule type" value="mRNA"/>
</dbReference>
<dbReference type="EMBL" id="BC139809">
    <property type="protein sequence ID" value="AAI39810.1"/>
    <property type="molecule type" value="mRNA"/>
</dbReference>
<dbReference type="EMBL" id="BC152397">
    <property type="protein sequence ID" value="AAI52398.1"/>
    <property type="molecule type" value="mRNA"/>
</dbReference>
<dbReference type="CCDS" id="CCDS26291.1"/>
<dbReference type="CCDS" id="CCDS26292.1"/>
<dbReference type="CCDS" id="CCDS26300.1"/>
<dbReference type="CCDS" id="CCDS26306.1"/>
<dbReference type="CCDS" id="CCDS26340.1"/>
<dbReference type="CCDS" id="CCDS26345.1"/>
<dbReference type="CCDS" id="CCDS26353.1"/>
<dbReference type="CCDS" id="CCDS26359.1"/>
<dbReference type="CCDS" id="CCDS26366.1"/>
<dbReference type="CCDS" id="CCDS26367.1"/>
<dbReference type="CCDS" id="CCDS39684.1"/>
<dbReference type="CCDS" id="CCDS51002.1"/>
<dbReference type="CCDS" id="CCDS56872.1"/>
<dbReference type="PIR" id="S03426">
    <property type="entry name" value="S03426"/>
</dbReference>
<dbReference type="PIR" id="S03427">
    <property type="entry name" value="S03427"/>
</dbReference>
<dbReference type="RefSeq" id="NP_001182350.1">
    <property type="nucleotide sequence ID" value="NM_001195421.1"/>
</dbReference>
<dbReference type="RefSeq" id="NP_291074.1">
    <property type="nucleotide sequence ID" value="NM_033596.3"/>
</dbReference>
<dbReference type="RefSeq" id="NP_694813.1">
    <property type="nucleotide sequence ID" value="NM_153173.4"/>
</dbReference>
<dbReference type="RefSeq" id="NP_783583.1">
    <property type="nucleotide sequence ID" value="NM_175652.3"/>
</dbReference>
<dbReference type="RefSeq" id="NP_783585.1">
    <property type="nucleotide sequence ID" value="NM_175654.2"/>
</dbReference>
<dbReference type="RefSeq" id="NP_783586.1">
    <property type="nucleotide sequence ID" value="NM_175655.2"/>
</dbReference>
<dbReference type="RefSeq" id="NP_783587.1">
    <property type="nucleotide sequence ID" value="NM_175656.3"/>
</dbReference>
<dbReference type="RefSeq" id="NP_783588.1">
    <property type="nucleotide sequence ID" value="NM_175657.2"/>
</dbReference>
<dbReference type="RefSeq" id="NP_835499.1">
    <property type="nucleotide sequence ID" value="NM_178192.2"/>
</dbReference>
<dbReference type="RefSeq" id="NP_835500.1">
    <property type="nucleotide sequence ID" value="NM_178193.2"/>
</dbReference>
<dbReference type="RefSeq" id="NP_835515.1">
    <property type="nucleotide sequence ID" value="NM_178208.2"/>
</dbReference>
<dbReference type="RefSeq" id="NP_835582.1">
    <property type="nucleotide sequence ID" value="NM_178210.2"/>
</dbReference>
<dbReference type="RefSeq" id="NP_835583.1">
    <property type="nucleotide sequence ID" value="NM_178211.2"/>
</dbReference>
<dbReference type="PDB" id="1F66">
    <property type="method" value="X-ray"/>
    <property type="resolution" value="2.60 A"/>
    <property type="chains" value="B/F=1-103"/>
</dbReference>
<dbReference type="PDB" id="1U35">
    <property type="method" value="X-ray"/>
    <property type="resolution" value="3.00 A"/>
    <property type="chains" value="B/F=1-103"/>
</dbReference>
<dbReference type="PDB" id="2WP2">
    <property type="method" value="X-ray"/>
    <property type="resolution" value="2.37 A"/>
    <property type="chains" value="P/Q=2-21"/>
</dbReference>
<dbReference type="PDB" id="4AU7">
    <property type="method" value="X-ray"/>
    <property type="resolution" value="2.07 A"/>
    <property type="chains" value="C=18-25"/>
</dbReference>
<dbReference type="PDB" id="4DOW">
    <property type="method" value="X-ray"/>
    <property type="resolution" value="1.95 A"/>
    <property type="chains" value="C/D=15-26"/>
</dbReference>
<dbReference type="PDB" id="5B1L">
    <property type="method" value="X-ray"/>
    <property type="resolution" value="2.35 A"/>
    <property type="chains" value="B/F=1-103"/>
</dbReference>
<dbReference type="PDB" id="5B1M">
    <property type="method" value="X-ray"/>
    <property type="resolution" value="2.34 A"/>
    <property type="chains" value="B/F=1-103"/>
</dbReference>
<dbReference type="PDB" id="5XM0">
    <property type="method" value="X-ray"/>
    <property type="resolution" value="2.87 A"/>
    <property type="chains" value="B/F=1-103"/>
</dbReference>
<dbReference type="PDB" id="5XM1">
    <property type="method" value="X-ray"/>
    <property type="resolution" value="3.45 A"/>
    <property type="chains" value="B/F=1-103"/>
</dbReference>
<dbReference type="PDB" id="7DBH">
    <property type="method" value="EM"/>
    <property type="resolution" value="3.60 A"/>
    <property type="chains" value="B/F=1-103"/>
</dbReference>
<dbReference type="PDB" id="7VBM">
    <property type="method" value="EM"/>
    <property type="resolution" value="3.40 A"/>
    <property type="chains" value="B/F=1-103"/>
</dbReference>
<dbReference type="PDB" id="8PKI">
    <property type="method" value="EM"/>
    <property type="resolution" value="2.58 A"/>
    <property type="chains" value="B/F=1-103"/>
</dbReference>
<dbReference type="PDB" id="8PKJ">
    <property type="method" value="EM"/>
    <property type="resolution" value="2.50 A"/>
    <property type="chains" value="B/F=1-103"/>
</dbReference>
<dbReference type="PDBsum" id="1F66"/>
<dbReference type="PDBsum" id="1U35"/>
<dbReference type="PDBsum" id="2WP2"/>
<dbReference type="PDBsum" id="4AU7"/>
<dbReference type="PDBsum" id="4DOW"/>
<dbReference type="PDBsum" id="5B1L"/>
<dbReference type="PDBsum" id="5B1M"/>
<dbReference type="PDBsum" id="5XM0"/>
<dbReference type="PDBsum" id="5XM1"/>
<dbReference type="PDBsum" id="7DBH"/>
<dbReference type="PDBsum" id="7VBM"/>
<dbReference type="PDBsum" id="8PKI"/>
<dbReference type="PDBsum" id="8PKJ"/>
<dbReference type="EMDB" id="EMD-17740"/>
<dbReference type="EMDB" id="EMD-30631"/>
<dbReference type="EMDB" id="EMD-31882"/>
<dbReference type="SMR" id="P62806"/>
<dbReference type="BioGRID" id="213404">
    <property type="interactions" value="9"/>
</dbReference>
<dbReference type="BioGRID" id="220610">
    <property type="interactions" value="7"/>
</dbReference>
<dbReference type="BioGRID" id="235074">
    <property type="interactions" value="4"/>
</dbReference>
<dbReference type="BioGRID" id="235075">
    <property type="interactions" value="10"/>
</dbReference>
<dbReference type="BioGRID" id="235076">
    <property type="interactions" value="3"/>
</dbReference>
<dbReference type="BioGRID" id="235077">
    <property type="interactions" value="3"/>
</dbReference>
<dbReference type="BioGRID" id="235078">
    <property type="interactions" value="3"/>
</dbReference>
<dbReference type="BioGRID" id="235079">
    <property type="interactions" value="4"/>
</dbReference>
<dbReference type="BioGRID" id="235080">
    <property type="interactions" value="3"/>
</dbReference>
<dbReference type="BioGRID" id="235942">
    <property type="interactions" value="16"/>
</dbReference>
<dbReference type="BioGRID" id="236472">
    <property type="interactions" value="15"/>
</dbReference>
<dbReference type="BioGRID" id="236473">
    <property type="interactions" value="4"/>
</dbReference>
<dbReference type="BioGRID" id="784565">
    <property type="interactions" value="4"/>
</dbReference>
<dbReference type="ComplexPortal" id="CPX-5705">
    <property type="entry name" value="CENP-A nucleosome complex"/>
</dbReference>
<dbReference type="ComplexPortal" id="CPX-5712">
    <property type="entry name" value="Nucleosome, variant H3.1-H2A.2-H2B.1"/>
</dbReference>
<dbReference type="ComplexPortal" id="CPX-5713">
    <property type="entry name" value="Nucleosome, variant H3.2-H2A.2-H2B.1"/>
</dbReference>
<dbReference type="ComplexPortal" id="CPX-5714">
    <property type="entry name" value="Nucleosome, variant H3.g-H2A.2-H2B.1"/>
</dbReference>
<dbReference type="ComplexPortal" id="CPX-5715">
    <property type="entry name" value="Nucleosome, variant H3.1-H2A.Z-H2B.1"/>
</dbReference>
<dbReference type="ComplexPortal" id="CPX-5716">
    <property type="entry name" value="Nucleosome, variant H3.1-H2A.V-H2B.1"/>
</dbReference>
<dbReference type="CORUM" id="P62806"/>
<dbReference type="DIP" id="DIP-45837N"/>
<dbReference type="FunCoup" id="P62806">
    <property type="interactions" value="1641"/>
</dbReference>
<dbReference type="IntAct" id="P62806">
    <property type="interactions" value="20"/>
</dbReference>
<dbReference type="MINT" id="P62806"/>
<dbReference type="STRING" id="10090.ENSMUSP00000085006"/>
<dbReference type="GlyGen" id="P62806">
    <property type="glycosylation" value="1 site, 1 O-linked glycan (1 site)"/>
</dbReference>
<dbReference type="iPTMnet" id="P62806"/>
<dbReference type="MetOSite" id="P62806"/>
<dbReference type="PhosphoSitePlus" id="P62806"/>
<dbReference type="SwissPalm" id="P62806"/>
<dbReference type="CPTAC" id="non-CPTAC-3425"/>
<dbReference type="jPOST" id="P62806"/>
<dbReference type="PaxDb" id="10090-ENSMUSP00000085006"/>
<dbReference type="ProteomicsDB" id="271127"/>
<dbReference type="Pumba" id="P62806"/>
<dbReference type="TopDownProteomics" id="P62806"/>
<dbReference type="ABCD" id="P62806">
    <property type="antibodies" value="1 sequenced antibody"/>
</dbReference>
<dbReference type="Antibodypedia" id="23657">
    <property type="antibodies" value="2128 antibodies from 42 providers"/>
</dbReference>
<dbReference type="Antibodypedia" id="70431">
    <property type="antibodies" value="10 antibodies from 6 providers"/>
</dbReference>
<dbReference type="Antibodypedia" id="73583">
    <property type="antibodies" value="122 antibodies from 11 providers"/>
</dbReference>
<dbReference type="Antibodypedia" id="75448">
    <property type="antibodies" value="5 antibodies from 3 providers"/>
</dbReference>
<dbReference type="Antibodypedia" id="76313">
    <property type="antibodies" value="19 antibodies from 5 providers"/>
</dbReference>
<dbReference type="DNASU" id="319156"/>
<dbReference type="Ensembl" id="ENSMUST00000087714.6">
    <property type="protein sequence ID" value="ENSMUSP00000085006.5"/>
    <property type="gene ID" value="ENSMUSG00000067455.6"/>
</dbReference>
<dbReference type="Ensembl" id="ENSMUST00000102964.4">
    <property type="protein sequence ID" value="ENSMUSP00000100029.3"/>
    <property type="gene ID" value="ENSMUSG00000060093.7"/>
</dbReference>
<dbReference type="Ensembl" id="ENSMUST00000102965.4">
    <property type="protein sequence ID" value="ENSMUSP00000100030.3"/>
    <property type="gene ID" value="ENSMUSG00000069266.6"/>
</dbReference>
<dbReference type="Ensembl" id="ENSMUST00000102967.3">
    <property type="protein sequence ID" value="ENSMUSP00000100032.2"/>
    <property type="gene ID" value="ENSMUSG00000060678.6"/>
</dbReference>
<dbReference type="Ensembl" id="ENSMUST00000102968.3">
    <property type="protein sequence ID" value="ENSMUSP00000100033.2"/>
    <property type="gene ID" value="ENSMUSG00000061482.8"/>
</dbReference>
<dbReference type="Ensembl" id="ENSMUST00000102971.2">
    <property type="protein sequence ID" value="ENSMUSP00000100036.2"/>
    <property type="gene ID" value="ENSMUSG00000069274.4"/>
</dbReference>
<dbReference type="Ensembl" id="ENSMUST00000102972.6">
    <property type="protein sequence ID" value="ENSMUSP00000100037.4"/>
    <property type="gene ID" value="ENSMUSG00000060981.8"/>
</dbReference>
<dbReference type="Ensembl" id="ENSMUST00000102977.4">
    <property type="protein sequence ID" value="ENSMUSP00000100042.3"/>
    <property type="gene ID" value="ENSMUSG00000060639.6"/>
</dbReference>
<dbReference type="Ensembl" id="ENSMUST00000102979.2">
    <property type="protein sequence ID" value="ENSMUSP00000100044.2"/>
    <property type="gene ID" value="ENSMUSG00000069305.4"/>
</dbReference>
<dbReference type="Ensembl" id="ENSMUST00000102983.2">
    <property type="protein sequence ID" value="ENSMUSP00000100048.2"/>
    <property type="gene ID" value="ENSMUSG00000064288.5"/>
</dbReference>
<dbReference type="Ensembl" id="ENSMUST00000104941.4">
    <property type="protein sequence ID" value="ENSMUSP00000100546.3"/>
    <property type="gene ID" value="ENSMUSG00000069306.6"/>
</dbReference>
<dbReference type="Ensembl" id="ENSMUST00000171473.3">
    <property type="protein sequence ID" value="ENSMUSP00000129930.2"/>
    <property type="gene ID" value="ENSMUSG00000091405.3"/>
</dbReference>
<dbReference type="Ensembl" id="ENSMUST00000179285.3">
    <property type="protein sequence ID" value="ENSMUSP00000136357.2"/>
    <property type="gene ID" value="ENSMUSG00000096010.3"/>
</dbReference>
<dbReference type="GeneID" id="100041230"/>
<dbReference type="GeneID" id="319155"/>
<dbReference type="GeneID" id="319156"/>
<dbReference type="GeneID" id="319157"/>
<dbReference type="GeneID" id="319158"/>
<dbReference type="GeneID" id="319159"/>
<dbReference type="GeneID" id="319160"/>
<dbReference type="GeneID" id="319161"/>
<dbReference type="GeneID" id="320332"/>
<dbReference type="GeneID" id="326619"/>
<dbReference type="GeneID" id="326620"/>
<dbReference type="GeneID" id="69386"/>
<dbReference type="GeneID" id="97122"/>
<dbReference type="KEGG" id="mmu:100041230"/>
<dbReference type="KEGG" id="mmu:319155"/>
<dbReference type="KEGG" id="mmu:319156"/>
<dbReference type="KEGG" id="mmu:319157"/>
<dbReference type="KEGG" id="mmu:319158"/>
<dbReference type="KEGG" id="mmu:319159"/>
<dbReference type="KEGG" id="mmu:319160"/>
<dbReference type="KEGG" id="mmu:319161"/>
<dbReference type="KEGG" id="mmu:320332"/>
<dbReference type="KEGG" id="mmu:326619"/>
<dbReference type="KEGG" id="mmu:326620"/>
<dbReference type="KEGG" id="mmu:69386"/>
<dbReference type="KEGG" id="mmu:97122"/>
<dbReference type="UCSC" id="uc007pre.1">
    <property type="organism name" value="mouse"/>
</dbReference>
<dbReference type="AGR" id="MGI:2140113"/>
<dbReference type="AGR" id="MGI:2448419"/>
<dbReference type="AGR" id="MGI:2448420"/>
<dbReference type="AGR" id="MGI:2448421"/>
<dbReference type="AGR" id="MGI:2448423"/>
<dbReference type="AGR" id="MGI:2448425"/>
<dbReference type="AGR" id="MGI:2448427"/>
<dbReference type="AGR" id="MGI:2448432"/>
<dbReference type="AGR" id="MGI:2448436"/>
<dbReference type="AGR" id="MGI:2448439"/>
<dbReference type="AGR" id="MGI:2448441"/>
<dbReference type="AGR" id="MGI:2448443"/>
<dbReference type="CTD" id="100041230"/>
<dbReference type="CTD" id="121504"/>
<dbReference type="CTD" id="319161"/>
<dbReference type="CTD" id="8294"/>
<dbReference type="CTD" id="8359"/>
<dbReference type="CTD" id="8360"/>
<dbReference type="CTD" id="8361"/>
<dbReference type="CTD" id="8362"/>
<dbReference type="CTD" id="8363"/>
<dbReference type="CTD" id="8364"/>
<dbReference type="CTD" id="8365"/>
<dbReference type="CTD" id="8366"/>
<dbReference type="CTD" id="8370"/>
<dbReference type="MGI" id="MGI:2448419">
    <property type="gene designation" value="H4c1"/>
</dbReference>
<dbReference type="MGI" id="MGI:2448436">
    <property type="gene designation" value="H4c11"/>
</dbReference>
<dbReference type="MGI" id="MGI:2448439">
    <property type="gene designation" value="H4c12"/>
</dbReference>
<dbReference type="MGI" id="MGI:2140113">
    <property type="gene designation" value="H4c14"/>
</dbReference>
<dbReference type="MGI" id="MGI:2448443">
    <property type="gene designation" value="H4c16"/>
</dbReference>
<dbReference type="MGI" id="MGI:2448420">
    <property type="gene designation" value="H4c2"/>
</dbReference>
<dbReference type="MGI" id="MGI:2448421">
    <property type="gene designation" value="H4c3"/>
</dbReference>
<dbReference type="MGI" id="MGI:2448423">
    <property type="gene designation" value="H4c4"/>
</dbReference>
<dbReference type="MGI" id="MGI:2448425">
    <property type="gene designation" value="H4c6"/>
</dbReference>
<dbReference type="MGI" id="MGI:2448427">
    <property type="gene designation" value="H4c8"/>
</dbReference>
<dbReference type="MGI" id="MGI:2448432">
    <property type="gene designation" value="H4c9"/>
</dbReference>
<dbReference type="MGI" id="MGI:2448441">
    <property type="gene designation" value="Hist1h4m"/>
</dbReference>
<dbReference type="VEuPathDB" id="HostDB:ENSMUSG00000060093"/>
<dbReference type="VEuPathDB" id="HostDB:ENSMUSG00000060639"/>
<dbReference type="VEuPathDB" id="HostDB:ENSMUSG00000060678"/>
<dbReference type="VEuPathDB" id="HostDB:ENSMUSG00000060981"/>
<dbReference type="VEuPathDB" id="HostDB:ENSMUSG00000061482"/>
<dbReference type="VEuPathDB" id="HostDB:ENSMUSG00000064288"/>
<dbReference type="VEuPathDB" id="HostDB:ENSMUSG00000067455"/>
<dbReference type="VEuPathDB" id="HostDB:ENSMUSG00000069266"/>
<dbReference type="VEuPathDB" id="HostDB:ENSMUSG00000069274"/>
<dbReference type="VEuPathDB" id="HostDB:ENSMUSG00000069305"/>
<dbReference type="VEuPathDB" id="HostDB:ENSMUSG00000069306"/>
<dbReference type="VEuPathDB" id="HostDB:ENSMUSG00000091405"/>
<dbReference type="VEuPathDB" id="HostDB:ENSMUSG00000096010"/>
<dbReference type="eggNOG" id="KOG3467">
    <property type="taxonomic scope" value="Eukaryota"/>
</dbReference>
<dbReference type="GeneTree" id="ENSGT01060000248528"/>
<dbReference type="HOGENOM" id="CLU_109117_2_3_1"/>
<dbReference type="InParanoid" id="P62806"/>
<dbReference type="OMA" id="XRISAMI"/>
<dbReference type="OrthoDB" id="10255923at2759"/>
<dbReference type="PhylomeDB" id="P62806"/>
<dbReference type="Reactome" id="R-MMU-110330">
    <property type="pathway name" value="Recognition and association of DNA glycosylase with site containing an affected purine"/>
</dbReference>
<dbReference type="Reactome" id="R-MMU-110331">
    <property type="pathway name" value="Cleavage of the damaged purine"/>
</dbReference>
<dbReference type="Reactome" id="R-MMU-212300">
    <property type="pathway name" value="PRC2 methylates histones and DNA"/>
</dbReference>
<dbReference type="Reactome" id="R-MMU-2299718">
    <property type="pathway name" value="Condensation of Prophase Chromosomes"/>
</dbReference>
<dbReference type="Reactome" id="R-MMU-2559586">
    <property type="pathway name" value="DNA Damage/Telomere Stress Induced Senescence"/>
</dbReference>
<dbReference type="Reactome" id="R-MMU-3214815">
    <property type="pathway name" value="HDACs deacetylate histones"/>
</dbReference>
<dbReference type="Reactome" id="R-MMU-3214841">
    <property type="pathway name" value="PKMTs methylate histone lysines"/>
</dbReference>
<dbReference type="Reactome" id="R-MMU-3214842">
    <property type="pathway name" value="HDMs demethylate histones"/>
</dbReference>
<dbReference type="Reactome" id="R-MMU-3214847">
    <property type="pathway name" value="HATs acetylate histones"/>
</dbReference>
<dbReference type="Reactome" id="R-MMU-3214858">
    <property type="pathway name" value="RMTs methylate histone arginines"/>
</dbReference>
<dbReference type="Reactome" id="R-MMU-4551638">
    <property type="pathway name" value="SUMOylation of chromatin organization proteins"/>
</dbReference>
<dbReference type="Reactome" id="R-MMU-5693565">
    <property type="pathway name" value="Recruitment and ATM-mediated phosphorylation of repair and signaling proteins at DNA double strand breaks"/>
</dbReference>
<dbReference type="Reactome" id="R-MMU-5693571">
    <property type="pathway name" value="Nonhomologous End-Joining (NHEJ)"/>
</dbReference>
<dbReference type="Reactome" id="R-MMU-5693607">
    <property type="pathway name" value="Processing of DNA double-strand break ends"/>
</dbReference>
<dbReference type="Reactome" id="R-MMU-606279">
    <property type="pathway name" value="Deposition of new CENPA-containing nucleosomes at the centromere"/>
</dbReference>
<dbReference type="Reactome" id="R-MMU-69473">
    <property type="pathway name" value="G2/M DNA damage checkpoint"/>
</dbReference>
<dbReference type="Reactome" id="R-MMU-8936459">
    <property type="pathway name" value="RUNX1 regulates genes involved in megakaryocyte differentiation and platelet function"/>
</dbReference>
<dbReference type="Reactome" id="R-MMU-9018519">
    <property type="pathway name" value="Estrogen-dependent gene expression"/>
</dbReference>
<dbReference type="Reactome" id="R-MMU-9670095">
    <property type="pathway name" value="Inhibition of DNA recombination at telomere"/>
</dbReference>
<dbReference type="Reactome" id="R-MMU-9841922">
    <property type="pathway name" value="MLL4 and MLL3 complexes regulate expression of PPARG target genes in adipogenesis and hepatic steatosis"/>
</dbReference>
<dbReference type="Reactome" id="R-MMU-9843940">
    <property type="pathway name" value="Regulation of endogenous retroelements by KRAB-ZFP proteins"/>
</dbReference>
<dbReference type="BioGRID-ORCS" id="100041230">
    <property type="hits" value="12 hits in 42 CRISPR screens"/>
</dbReference>
<dbReference type="BioGRID-ORCS" id="319155">
    <property type="hits" value="7 hits in 74 CRISPR screens"/>
</dbReference>
<dbReference type="BioGRID-ORCS" id="319156">
    <property type="hits" value="17 hits in 77 CRISPR screens"/>
</dbReference>
<dbReference type="BioGRID-ORCS" id="319157">
    <property type="hits" value="8 hits in 55 CRISPR screens"/>
</dbReference>
<dbReference type="BioGRID-ORCS" id="319158">
    <property type="hits" value="7 hits in 41 CRISPR screens"/>
</dbReference>
<dbReference type="BioGRID-ORCS" id="319159">
    <property type="hits" value="11 hits in 43 CRISPR screens"/>
</dbReference>
<dbReference type="BioGRID-ORCS" id="319160">
    <property type="hits" value="9 hits in 42 CRISPR screens"/>
</dbReference>
<dbReference type="BioGRID-ORCS" id="319161">
    <property type="hits" value="14 hits in 39 CRISPR screens"/>
</dbReference>
<dbReference type="BioGRID-ORCS" id="320332">
    <property type="hits" value="6 hits in 78 CRISPR screens"/>
</dbReference>
<dbReference type="BioGRID-ORCS" id="326619">
    <property type="hits" value="12 hits in 73 CRISPR screens"/>
</dbReference>
<dbReference type="BioGRID-ORCS" id="326620">
    <property type="hits" value="12 hits in 55 CRISPR screens"/>
</dbReference>
<dbReference type="BioGRID-ORCS" id="69386">
    <property type="hits" value="11 hits in 75 CRISPR screens"/>
</dbReference>
<dbReference type="BioGRID-ORCS" id="97122">
    <property type="hits" value="10 hits in 76 CRISPR screens"/>
</dbReference>
<dbReference type="ChiTaRS" id="Hist1h4b">
    <property type="organism name" value="mouse"/>
</dbReference>
<dbReference type="ChiTaRS" id="Hist1h4d">
    <property type="organism name" value="mouse"/>
</dbReference>
<dbReference type="ChiTaRS" id="Hist1h4h">
    <property type="organism name" value="mouse"/>
</dbReference>
<dbReference type="ChiTaRS" id="Hist1h4i">
    <property type="organism name" value="mouse"/>
</dbReference>
<dbReference type="EvolutionaryTrace" id="P62806"/>
<dbReference type="PRO" id="PR:P62806"/>
<dbReference type="Proteomes" id="UP000000589">
    <property type="component" value="Chromosome 13"/>
</dbReference>
<dbReference type="Proteomes" id="UP000000589">
    <property type="component" value="Chromosome 3"/>
</dbReference>
<dbReference type="Proteomes" id="UP000000589">
    <property type="component" value="Chromosome 6"/>
</dbReference>
<dbReference type="RNAct" id="P62806">
    <property type="molecule type" value="protein"/>
</dbReference>
<dbReference type="Bgee" id="ENSMUSG00000060093">
    <property type="expression patterns" value="Expressed in spermatid and 64 other cell types or tissues"/>
</dbReference>
<dbReference type="ExpressionAtlas" id="P62806">
    <property type="expression patterns" value="baseline and differential"/>
</dbReference>
<dbReference type="GO" id="GO:0043505">
    <property type="term" value="C:CENP-A containing nucleosome"/>
    <property type="evidence" value="ECO:0000266"/>
    <property type="project" value="ComplexPortal"/>
</dbReference>
<dbReference type="GO" id="GO:0005654">
    <property type="term" value="C:nucleoplasm"/>
    <property type="evidence" value="ECO:0000304"/>
    <property type="project" value="Reactome"/>
</dbReference>
<dbReference type="GO" id="GO:0000786">
    <property type="term" value="C:nucleosome"/>
    <property type="evidence" value="ECO:0000250"/>
    <property type="project" value="UniProtKB"/>
</dbReference>
<dbReference type="GO" id="GO:0005634">
    <property type="term" value="C:nucleus"/>
    <property type="evidence" value="ECO:0000314"/>
    <property type="project" value="MGI"/>
</dbReference>
<dbReference type="GO" id="GO:0003677">
    <property type="term" value="F:DNA binding"/>
    <property type="evidence" value="ECO:0000250"/>
    <property type="project" value="UniProtKB"/>
</dbReference>
<dbReference type="GO" id="GO:0046982">
    <property type="term" value="F:protein heterodimerization activity"/>
    <property type="evidence" value="ECO:0007669"/>
    <property type="project" value="InterPro"/>
</dbReference>
<dbReference type="GO" id="GO:0030527">
    <property type="term" value="F:structural constituent of chromatin"/>
    <property type="evidence" value="ECO:0007669"/>
    <property type="project" value="InterPro"/>
</dbReference>
<dbReference type="GO" id="GO:0006325">
    <property type="term" value="P:chromatin organization"/>
    <property type="evidence" value="ECO:0000303"/>
    <property type="project" value="ComplexPortal"/>
</dbReference>
<dbReference type="GO" id="GO:0006334">
    <property type="term" value="P:nucleosome assembly"/>
    <property type="evidence" value="ECO:0000250"/>
    <property type="project" value="UniProtKB"/>
</dbReference>
<dbReference type="GO" id="GO:0061644">
    <property type="term" value="P:protein localization to CENP-A containing chromatin"/>
    <property type="evidence" value="ECO:0000303"/>
    <property type="project" value="ComplexPortal"/>
</dbReference>
<dbReference type="CDD" id="cd22912">
    <property type="entry name" value="HFD_H4"/>
    <property type="match status" value="1"/>
</dbReference>
<dbReference type="FunFam" id="1.10.20.10:FF:000002">
    <property type="entry name" value="Histone H4"/>
    <property type="match status" value="1"/>
</dbReference>
<dbReference type="Gene3D" id="1.10.20.10">
    <property type="entry name" value="Histone, subunit A"/>
    <property type="match status" value="1"/>
</dbReference>
<dbReference type="InterPro" id="IPR035425">
    <property type="entry name" value="CENP-T/H4_C"/>
</dbReference>
<dbReference type="InterPro" id="IPR009072">
    <property type="entry name" value="Histone-fold"/>
</dbReference>
<dbReference type="InterPro" id="IPR001951">
    <property type="entry name" value="Histone_H4"/>
</dbReference>
<dbReference type="InterPro" id="IPR019809">
    <property type="entry name" value="Histone_H4_CS"/>
</dbReference>
<dbReference type="InterPro" id="IPR004823">
    <property type="entry name" value="TAF_TATA-bd_Histone-like_dom"/>
</dbReference>
<dbReference type="PANTHER" id="PTHR10484">
    <property type="entry name" value="HISTONE H4"/>
    <property type="match status" value="1"/>
</dbReference>
<dbReference type="Pfam" id="PF15511">
    <property type="entry name" value="CENP-T_C"/>
    <property type="match status" value="1"/>
</dbReference>
<dbReference type="PRINTS" id="PR00623">
    <property type="entry name" value="HISTONEH4"/>
</dbReference>
<dbReference type="SMART" id="SM00417">
    <property type="entry name" value="H4"/>
    <property type="match status" value="1"/>
</dbReference>
<dbReference type="SMART" id="SM00803">
    <property type="entry name" value="TAF"/>
    <property type="match status" value="1"/>
</dbReference>
<dbReference type="SUPFAM" id="SSF47113">
    <property type="entry name" value="Histone-fold"/>
    <property type="match status" value="1"/>
</dbReference>
<dbReference type="PROSITE" id="PS00047">
    <property type="entry name" value="HISTONE_H4"/>
    <property type="match status" value="1"/>
</dbReference>
<name>H4_MOUSE</name>
<sequence>MSGRGKGGKGLGKGGAKRHRKVLRDNIQGITKPAIRRLARRGGVKRISGLIYEETRGVLKVFLENVIRDAVTYTEHAKRKTVTAMDVVYALKRQGRTLYGFGG</sequence>